<protein>
    <recommendedName>
        <fullName>Isoflavone 4'-O-methyltransferase</fullName>
        <shortName>LjHI4'OMT</shortName>
        <ecNumber evidence="2">2.1.1.46</ecNumber>
    </recommendedName>
    <alternativeName>
        <fullName>2,7,4'-trihydroxyisoflavanone 4'-O-methyltransferase</fullName>
        <ecNumber evidence="2">2.1.1.212</ecNumber>
    </alternativeName>
    <alternativeName>
        <fullName>S-adenosyl-L-methionine: 2,7,4'-trihydroxyisoflavanone 4'-O-methyltransferase</fullName>
    </alternativeName>
</protein>
<sequence length="365" mass="40690">MDFSSSNGSEDTELSQAQIHLYKHVYNFVSSMALKSAMELGIADVIHSHGKPITLPELATALNLRPSKIGVLHRFLRLLTHNGFFAKTTVSRGEGAEEETAYGLTPPSKLLVKSNSTCLAPIVKGALHPSSLDMWRSSKKWFLEDNEELTLFESATGESFWEFLNKETESDTLSMFQEAMAADSHMFKLALKECKHVFEGLGSLVDVAGGRGGVTKLIREAFPHVKCTVFDQPQVVANLTGDENLNFVGGDMFKSVPPADAVLLKWVLHDWNDELSLKILKNCKEAISGRGKEGKVIIIDISIDETSDDRELTELKLDYDLVMLTMFNGKEREKKEWEKLIYDAGFSSYKITPICGFKSLIEVFP</sequence>
<keyword id="KW-0489">Methyltransferase</keyword>
<keyword id="KW-0949">S-adenosyl-L-methionine</keyword>
<keyword id="KW-0808">Transferase</keyword>
<accession>Q84KK4</accession>
<name>I4OMT_LOTJA</name>
<evidence type="ECO:0000255" key="1">
    <source>
        <dbReference type="PROSITE-ProRule" id="PRU01020"/>
    </source>
</evidence>
<evidence type="ECO:0000269" key="2">
    <source>
    </source>
</evidence>
<reference key="1">
    <citation type="journal article" date="2000" name="DNA Res.">
        <title>Generation of 7137 non-redundant expressed sequence tags from a legume, Lotus japonicus.</title>
        <authorList>
            <person name="Asamizu E."/>
            <person name="Nakamura Y."/>
            <person name="Sato S."/>
            <person name="Tabata S."/>
        </authorList>
    </citation>
    <scope>NUCLEOTIDE SEQUENCE [MRNA]</scope>
</reference>
<reference key="2">
    <citation type="journal article" date="2003" name="Plant Cell Physiol.">
        <title>cDNA cloning and biochemical characterization of S-adenosyl-L-methionine: 2,7,4'-trihydroxyisoflavanone 4'-O-methyltransferase, a critical enzyme of the legume isoflavonoid phytoalexin pathway.</title>
        <authorList>
            <person name="Akashi T."/>
            <person name="Sawada Y."/>
            <person name="Shimada N."/>
            <person name="Sakurai N."/>
            <person name="Aoki T."/>
            <person name="Ayabe S."/>
        </authorList>
    </citation>
    <scope>NUCLEOTIDE SEQUENCE [MRNA]</scope>
    <scope>FUNCTION</scope>
    <scope>CATALYTIC ACTIVITY</scope>
    <scope>INDUCTION BY ELICITOR</scope>
</reference>
<feature type="chain" id="PRO_0000411976" description="Isoflavone 4'-O-methyltransferase">
    <location>
        <begin position="1"/>
        <end position="365"/>
    </location>
</feature>
<feature type="active site" description="Proton acceptor" evidence="1">
    <location>
        <position position="269"/>
    </location>
</feature>
<feature type="binding site" evidence="1">
    <location>
        <begin position="207"/>
        <end position="210"/>
    </location>
    <ligand>
        <name>S-adenosyl-L-methionine</name>
        <dbReference type="ChEBI" id="CHEBI:59789"/>
    </ligand>
</feature>
<feature type="binding site" evidence="1">
    <location>
        <begin position="231"/>
        <end position="232"/>
    </location>
    <ligand>
        <name>S-adenosyl-L-methionine</name>
        <dbReference type="ChEBI" id="CHEBI:59789"/>
    </ligand>
</feature>
<feature type="binding site" evidence="1">
    <location>
        <position position="231"/>
    </location>
    <ligand>
        <name>S-adenosyl-L-methionine</name>
        <dbReference type="ChEBI" id="CHEBI:59789"/>
    </ligand>
</feature>
<feature type="binding site" evidence="1">
    <location>
        <begin position="251"/>
        <end position="252"/>
    </location>
    <ligand>
        <name>S-adenosyl-L-methionine</name>
        <dbReference type="ChEBI" id="CHEBI:59789"/>
    </ligand>
</feature>
<feature type="binding site" evidence="1">
    <location>
        <position position="265"/>
    </location>
    <ligand>
        <name>S-adenosyl-L-methionine</name>
        <dbReference type="ChEBI" id="CHEBI:59789"/>
    </ligand>
</feature>
<proteinExistence type="evidence at protein level"/>
<comment type="function">
    <text evidence="2">2-hydroxyisoflavanone 4'-O-methyltransferase involved in the biosynthesis of formononetin. Can use 2,7,4'-trihydroxyisoflavanone as substrate, but not daidzein.</text>
</comment>
<comment type="catalytic activity">
    <reaction evidence="2">
        <text>a 4'-hydroxyisoflavone + S-adenosyl-L-methionine = a 4'-methoxyisoflavone + S-adenosyl-L-homocysteine + H(+)</text>
        <dbReference type="Rhea" id="RHEA:31739"/>
        <dbReference type="ChEBI" id="CHEBI:15378"/>
        <dbReference type="ChEBI" id="CHEBI:57856"/>
        <dbReference type="ChEBI" id="CHEBI:59789"/>
        <dbReference type="ChEBI" id="CHEBI:63328"/>
        <dbReference type="ChEBI" id="CHEBI:133959"/>
        <dbReference type="EC" id="2.1.1.46"/>
    </reaction>
</comment>
<comment type="catalytic activity">
    <reaction evidence="2">
        <text>(2R,3S)-2,4',7-trihydroxyisoflavanone + S-adenosyl-L-methionine = (2R,3S)-2,7-dihydroxy-4'-methoxyisoflavanone + S-adenosyl-L-homocysteine + H(+)</text>
        <dbReference type="Rhea" id="RHEA:31371"/>
        <dbReference type="ChEBI" id="CHEBI:15378"/>
        <dbReference type="ChEBI" id="CHEBI:57856"/>
        <dbReference type="ChEBI" id="CHEBI:59789"/>
        <dbReference type="ChEBI" id="CHEBI:63325"/>
        <dbReference type="ChEBI" id="CHEBI:85906"/>
        <dbReference type="EC" id="2.1.1.212"/>
    </reaction>
</comment>
<comment type="induction">
    <text evidence="2">Up-regulated by elicitor.</text>
</comment>
<comment type="similarity">
    <text evidence="1">Belongs to the class I-like SAM-binding methyltransferase superfamily. Cation-independent O-methyltransferase family. COMT subfamily.</text>
</comment>
<dbReference type="EC" id="2.1.1.46" evidence="2"/>
<dbReference type="EC" id="2.1.1.212" evidence="2"/>
<dbReference type="EMBL" id="AB091686">
    <property type="protein sequence ID" value="BAC58013.1"/>
    <property type="molecule type" value="mRNA"/>
</dbReference>
<dbReference type="SMR" id="Q84KK4"/>
<dbReference type="ProMEX" id="Q84KK4"/>
<dbReference type="KEGG" id="ag:BAC58013"/>
<dbReference type="OMA" id="MFHAWMD"/>
<dbReference type="OrthoDB" id="2410195at2759"/>
<dbReference type="BRENDA" id="2.1.1.212">
    <property type="organism ID" value="3076"/>
</dbReference>
<dbReference type="GO" id="GO:0102670">
    <property type="term" value="F:2,7,4'-trihydroxyisoflavanone-4'-O-methyltransferase activity"/>
    <property type="evidence" value="ECO:0007669"/>
    <property type="project" value="UniProtKB-EC"/>
</dbReference>
<dbReference type="GO" id="GO:0030746">
    <property type="term" value="F:isoflavone 4'-O-methyltransferase activity"/>
    <property type="evidence" value="ECO:0000314"/>
    <property type="project" value="UniProtKB"/>
</dbReference>
<dbReference type="GO" id="GO:0008171">
    <property type="term" value="F:O-methyltransferase activity"/>
    <property type="evidence" value="ECO:0007669"/>
    <property type="project" value="InterPro"/>
</dbReference>
<dbReference type="GO" id="GO:0046983">
    <property type="term" value="F:protein dimerization activity"/>
    <property type="evidence" value="ECO:0007669"/>
    <property type="project" value="InterPro"/>
</dbReference>
<dbReference type="GO" id="GO:0009701">
    <property type="term" value="P:isoflavonoid phytoalexin biosynthetic process"/>
    <property type="evidence" value="ECO:0000314"/>
    <property type="project" value="UniProtKB"/>
</dbReference>
<dbReference type="GO" id="GO:0032259">
    <property type="term" value="P:methylation"/>
    <property type="evidence" value="ECO:0007669"/>
    <property type="project" value="UniProtKB-KW"/>
</dbReference>
<dbReference type="FunFam" id="1.10.10.10:FF:000213">
    <property type="entry name" value="Coniferyl alcohol 9-O-methyltransferase"/>
    <property type="match status" value="1"/>
</dbReference>
<dbReference type="FunFam" id="3.40.50.150:FF:000206">
    <property type="entry name" value="O-methyltransferase ZRP4"/>
    <property type="match status" value="1"/>
</dbReference>
<dbReference type="Gene3D" id="3.40.50.150">
    <property type="entry name" value="Vaccinia Virus protein VP39"/>
    <property type="match status" value="1"/>
</dbReference>
<dbReference type="Gene3D" id="1.10.10.10">
    <property type="entry name" value="Winged helix-like DNA-binding domain superfamily/Winged helix DNA-binding domain"/>
    <property type="match status" value="1"/>
</dbReference>
<dbReference type="InterPro" id="IPR016461">
    <property type="entry name" value="COMT-like"/>
</dbReference>
<dbReference type="InterPro" id="IPR001077">
    <property type="entry name" value="O_MeTrfase_dom"/>
</dbReference>
<dbReference type="InterPro" id="IPR012967">
    <property type="entry name" value="Plant_O-MeTrfase_dimerisation"/>
</dbReference>
<dbReference type="InterPro" id="IPR029063">
    <property type="entry name" value="SAM-dependent_MTases_sf"/>
</dbReference>
<dbReference type="InterPro" id="IPR036388">
    <property type="entry name" value="WH-like_DNA-bd_sf"/>
</dbReference>
<dbReference type="InterPro" id="IPR036390">
    <property type="entry name" value="WH_DNA-bd_sf"/>
</dbReference>
<dbReference type="PANTHER" id="PTHR11746">
    <property type="entry name" value="O-METHYLTRANSFERASE"/>
    <property type="match status" value="1"/>
</dbReference>
<dbReference type="Pfam" id="PF08100">
    <property type="entry name" value="Dimerisation"/>
    <property type="match status" value="1"/>
</dbReference>
<dbReference type="Pfam" id="PF00891">
    <property type="entry name" value="Methyltransf_2"/>
    <property type="match status" value="1"/>
</dbReference>
<dbReference type="PIRSF" id="PIRSF005739">
    <property type="entry name" value="O-mtase"/>
    <property type="match status" value="1"/>
</dbReference>
<dbReference type="SUPFAM" id="SSF53335">
    <property type="entry name" value="S-adenosyl-L-methionine-dependent methyltransferases"/>
    <property type="match status" value="1"/>
</dbReference>
<dbReference type="SUPFAM" id="SSF46785">
    <property type="entry name" value="Winged helix' DNA-binding domain"/>
    <property type="match status" value="1"/>
</dbReference>
<dbReference type="PROSITE" id="PS51683">
    <property type="entry name" value="SAM_OMT_II"/>
    <property type="match status" value="1"/>
</dbReference>
<gene>
    <name type="primary">HI4'OMT</name>
</gene>
<organism>
    <name type="scientific">Lotus japonicus</name>
    <name type="common">Lotus corniculatus var. japonicus</name>
    <dbReference type="NCBI Taxonomy" id="34305"/>
    <lineage>
        <taxon>Eukaryota</taxon>
        <taxon>Viridiplantae</taxon>
        <taxon>Streptophyta</taxon>
        <taxon>Embryophyta</taxon>
        <taxon>Tracheophyta</taxon>
        <taxon>Spermatophyta</taxon>
        <taxon>Magnoliopsida</taxon>
        <taxon>eudicotyledons</taxon>
        <taxon>Gunneridae</taxon>
        <taxon>Pentapetalae</taxon>
        <taxon>rosids</taxon>
        <taxon>fabids</taxon>
        <taxon>Fabales</taxon>
        <taxon>Fabaceae</taxon>
        <taxon>Papilionoideae</taxon>
        <taxon>50 kb inversion clade</taxon>
        <taxon>NPAAA clade</taxon>
        <taxon>Hologalegina</taxon>
        <taxon>robinioid clade</taxon>
        <taxon>Loteae</taxon>
        <taxon>Lotus</taxon>
    </lineage>
</organism>